<dbReference type="EC" id="7.1.1.8" evidence="5"/>
<dbReference type="EMBL" id="AL123456">
    <property type="protein sequence ID" value="CCP44971.1"/>
    <property type="molecule type" value="Genomic_DNA"/>
</dbReference>
<dbReference type="PIR" id="C70784">
    <property type="entry name" value="C70784"/>
</dbReference>
<dbReference type="RefSeq" id="NP_216710.1">
    <property type="nucleotide sequence ID" value="NC_000962.3"/>
</dbReference>
<dbReference type="RefSeq" id="WP_003411392.1">
    <property type="nucleotide sequence ID" value="NZ_NVQJ01000008.1"/>
</dbReference>
<dbReference type="PDB" id="7E1V">
    <property type="method" value="EM"/>
    <property type="resolution" value="2.68 A"/>
    <property type="chains" value="C/O=2-280"/>
</dbReference>
<dbReference type="PDB" id="7E1W">
    <property type="method" value="EM"/>
    <property type="resolution" value="2.67 A"/>
    <property type="chains" value="C/O=2-280"/>
</dbReference>
<dbReference type="PDB" id="7E1X">
    <property type="method" value="EM"/>
    <property type="resolution" value="2.93 A"/>
    <property type="chains" value="C/O=2-280"/>
</dbReference>
<dbReference type="PDB" id="8HCR">
    <property type="method" value="EM"/>
    <property type="chains" value="C/O=1-280"/>
</dbReference>
<dbReference type="PDBsum" id="7E1V"/>
<dbReference type="PDBsum" id="7E1W"/>
<dbReference type="PDBsum" id="7E1X"/>
<dbReference type="PDBsum" id="8HCR"/>
<dbReference type="EMDB" id="EMD-30943"/>
<dbReference type="EMDB" id="EMD-30944"/>
<dbReference type="EMDB" id="EMD-30945"/>
<dbReference type="EMDB" id="EMD-34664"/>
<dbReference type="SMR" id="P9WP35"/>
<dbReference type="FunCoup" id="P9WP35">
    <property type="interactions" value="47"/>
</dbReference>
<dbReference type="STRING" id="83332.Rv2194"/>
<dbReference type="PaxDb" id="83332-Rv2194"/>
<dbReference type="DNASU" id="888737"/>
<dbReference type="GeneID" id="888737"/>
<dbReference type="KEGG" id="mtu:Rv2194"/>
<dbReference type="KEGG" id="mtv:RVBD_2194"/>
<dbReference type="PATRIC" id="fig|83332.111.peg.2441"/>
<dbReference type="TubercuList" id="Rv2194"/>
<dbReference type="eggNOG" id="COG2010">
    <property type="taxonomic scope" value="Bacteria"/>
</dbReference>
<dbReference type="InParanoid" id="P9WP35"/>
<dbReference type="OrthoDB" id="9811281at2"/>
<dbReference type="PhylomeDB" id="P9WP35"/>
<dbReference type="Proteomes" id="UP000001584">
    <property type="component" value="Chromosome"/>
</dbReference>
<dbReference type="GO" id="GO:0005886">
    <property type="term" value="C:plasma membrane"/>
    <property type="evidence" value="ECO:0007005"/>
    <property type="project" value="MTBBASE"/>
</dbReference>
<dbReference type="GO" id="GO:0004129">
    <property type="term" value="F:cytochrome-c oxidase activity"/>
    <property type="evidence" value="ECO:0000318"/>
    <property type="project" value="GO_Central"/>
</dbReference>
<dbReference type="GO" id="GO:0020037">
    <property type="term" value="F:heme binding"/>
    <property type="evidence" value="ECO:0007669"/>
    <property type="project" value="InterPro"/>
</dbReference>
<dbReference type="GO" id="GO:0005506">
    <property type="term" value="F:iron ion binding"/>
    <property type="evidence" value="ECO:0007669"/>
    <property type="project" value="InterPro"/>
</dbReference>
<dbReference type="GO" id="GO:0008121">
    <property type="term" value="F:ubiquinol-cytochrome-c reductase activity"/>
    <property type="evidence" value="ECO:0007669"/>
    <property type="project" value="UniProtKB-EC"/>
</dbReference>
<dbReference type="FunFam" id="1.10.760.10:FF:000009">
    <property type="entry name" value="Cytochrome bc1 complex cytochrome c subunit"/>
    <property type="match status" value="1"/>
</dbReference>
<dbReference type="Gene3D" id="1.10.760.10">
    <property type="entry name" value="Cytochrome c-like domain"/>
    <property type="match status" value="2"/>
</dbReference>
<dbReference type="InterPro" id="IPR009152">
    <property type="entry name" value="bc1_cytC-su"/>
</dbReference>
<dbReference type="InterPro" id="IPR009056">
    <property type="entry name" value="Cyt_c-like_dom"/>
</dbReference>
<dbReference type="InterPro" id="IPR036909">
    <property type="entry name" value="Cyt_c-like_dom_sf"/>
</dbReference>
<dbReference type="InterPro" id="IPR050597">
    <property type="entry name" value="Cytochrome_c_Oxidase_Subunit"/>
</dbReference>
<dbReference type="PANTHER" id="PTHR33751">
    <property type="entry name" value="CBB3-TYPE CYTOCHROME C OXIDASE SUBUNIT FIXP"/>
    <property type="match status" value="1"/>
</dbReference>
<dbReference type="PANTHER" id="PTHR33751:SF13">
    <property type="entry name" value="CYTOCHROME BC1 COMPLEX CYTOCHROME C SUBUNIT"/>
    <property type="match status" value="1"/>
</dbReference>
<dbReference type="Pfam" id="PF00034">
    <property type="entry name" value="Cytochrom_C"/>
    <property type="match status" value="1"/>
</dbReference>
<dbReference type="Pfam" id="PF13442">
    <property type="entry name" value="Cytochrome_CBB3"/>
    <property type="match status" value="1"/>
</dbReference>
<dbReference type="PIRSF" id="PIRSF000007">
    <property type="entry name" value="Ubiq_cycred_cyc"/>
    <property type="match status" value="1"/>
</dbReference>
<dbReference type="SUPFAM" id="SSF46626">
    <property type="entry name" value="Cytochrome c"/>
    <property type="match status" value="2"/>
</dbReference>
<dbReference type="PROSITE" id="PS51007">
    <property type="entry name" value="CYTC"/>
    <property type="match status" value="2"/>
</dbReference>
<organism>
    <name type="scientific">Mycobacterium tuberculosis (strain ATCC 25618 / H37Rv)</name>
    <dbReference type="NCBI Taxonomy" id="83332"/>
    <lineage>
        <taxon>Bacteria</taxon>
        <taxon>Bacillati</taxon>
        <taxon>Actinomycetota</taxon>
        <taxon>Actinomycetes</taxon>
        <taxon>Mycobacteriales</taxon>
        <taxon>Mycobacteriaceae</taxon>
        <taxon>Mycobacterium</taxon>
        <taxon>Mycobacterium tuberculosis complex</taxon>
    </lineage>
</organism>
<proteinExistence type="evidence at protein level"/>
<sequence length="280" mass="29138">MTKLGFTRSGGSKSGRTRRRLRRRLSGGVLLLIALTIAGGLAAVLTPTPQVAVADESSSALLRTGKQLFDTSCVSCHGANLQGVPDHGPSLIGVGEAAVYFQVSTGRMPAMRGEAQAPRKDPIFDEAQIDAIGAYVQANGGGPTVVRNPDGSIATQSLRGNDLGRGGDLFRLNCASCHNFTGKGGALSSGKYAPDLAPANEQQILTAMLTGPQNMPKFSNRQLSFEAKKDIIAYVKVATEARQPGGYLLGGFGPAPEGMAMWIIGMVAAIGLALWIGARS</sequence>
<accession>P9WP35</accession>
<accession>L0TBS3</accession>
<accession>P63887</accession>
<accession>Q10386</accession>
<reference key="1">
    <citation type="journal article" date="1998" name="Nature">
        <title>Deciphering the biology of Mycobacterium tuberculosis from the complete genome sequence.</title>
        <authorList>
            <person name="Cole S.T."/>
            <person name="Brosch R."/>
            <person name="Parkhill J."/>
            <person name="Garnier T."/>
            <person name="Churcher C.M."/>
            <person name="Harris D.E."/>
            <person name="Gordon S.V."/>
            <person name="Eiglmeier K."/>
            <person name="Gas S."/>
            <person name="Barry C.E. III"/>
            <person name="Tekaia F."/>
            <person name="Badcock K."/>
            <person name="Basham D."/>
            <person name="Brown D."/>
            <person name="Chillingworth T."/>
            <person name="Connor R."/>
            <person name="Davies R.M."/>
            <person name="Devlin K."/>
            <person name="Feltwell T."/>
            <person name="Gentles S."/>
            <person name="Hamlin N."/>
            <person name="Holroyd S."/>
            <person name="Hornsby T."/>
            <person name="Jagels K."/>
            <person name="Krogh A."/>
            <person name="McLean J."/>
            <person name="Moule S."/>
            <person name="Murphy L.D."/>
            <person name="Oliver S."/>
            <person name="Osborne J."/>
            <person name="Quail M.A."/>
            <person name="Rajandream M.A."/>
            <person name="Rogers J."/>
            <person name="Rutter S."/>
            <person name="Seeger K."/>
            <person name="Skelton S."/>
            <person name="Squares S."/>
            <person name="Squares R."/>
            <person name="Sulston J.E."/>
            <person name="Taylor K."/>
            <person name="Whitehead S."/>
            <person name="Barrell B.G."/>
        </authorList>
    </citation>
    <scope>NUCLEOTIDE SEQUENCE [LARGE SCALE GENOMIC DNA]</scope>
    <source>
        <strain>ATCC 25618 / H37Rv</strain>
    </source>
</reference>
<reference key="2">
    <citation type="journal article" date="2008" name="BMC Syst. Biol.">
        <title>targetTB: a target identification pipeline for Mycobacterium tuberculosis through an interactome, reactome and genome-scale structural analysis.</title>
        <authorList>
            <person name="Raman K."/>
            <person name="Yeturu K."/>
            <person name="Chandra N."/>
        </authorList>
    </citation>
    <scope>IDENTIFICATION AS A DRUG TARGET [LARGE SCALE ANALYSIS]</scope>
</reference>
<reference key="3">
    <citation type="journal article" date="2011" name="Mol. Cell. Proteomics">
        <title>Proteogenomic analysis of Mycobacterium tuberculosis by high resolution mass spectrometry.</title>
        <authorList>
            <person name="Kelkar D.S."/>
            <person name="Kumar D."/>
            <person name="Kumar P."/>
            <person name="Balakrishnan L."/>
            <person name="Muthusamy B."/>
            <person name="Yadav A.K."/>
            <person name="Shrivastava P."/>
            <person name="Marimuthu A."/>
            <person name="Anand S."/>
            <person name="Sundaram H."/>
            <person name="Kingsbury R."/>
            <person name="Harsha H.C."/>
            <person name="Nair B."/>
            <person name="Prasad T.S."/>
            <person name="Chauhan D.S."/>
            <person name="Katoch K."/>
            <person name="Katoch V.M."/>
            <person name="Kumar P."/>
            <person name="Chaerkady R."/>
            <person name="Ramachandran S."/>
            <person name="Dash D."/>
            <person name="Pandey A."/>
        </authorList>
    </citation>
    <scope>IDENTIFICATION BY MASS SPECTROMETRY [LARGE SCALE ANALYSIS]</scope>
    <source>
        <strain>ATCC 25618 / H37Rv</strain>
    </source>
</reference>
<feature type="chain" id="PRO_0000108450" description="Cytochrome bc1 complex cytochrome c subunit">
    <location>
        <begin position="1"/>
        <end position="280"/>
    </location>
</feature>
<feature type="transmembrane region" description="Helical" evidence="2">
    <location>
        <begin position="25"/>
        <end position="45"/>
    </location>
</feature>
<feature type="transmembrane region" description="Helical" evidence="2">
    <location>
        <begin position="258"/>
        <end position="278"/>
    </location>
</feature>
<feature type="domain" description="Cytochrome c 1" evidence="3">
    <location>
        <begin position="60"/>
        <end position="140"/>
    </location>
</feature>
<feature type="domain" description="Cytochrome c 2" evidence="3">
    <location>
        <begin position="161"/>
        <end position="239"/>
    </location>
</feature>
<feature type="binding site" description="covalent" evidence="3">
    <location>
        <position position="73"/>
    </location>
    <ligand>
        <name>heme c</name>
        <dbReference type="ChEBI" id="CHEBI:61717"/>
        <label>1</label>
    </ligand>
</feature>
<feature type="binding site" description="covalent" evidence="3">
    <location>
        <position position="76"/>
    </location>
    <ligand>
        <name>heme c</name>
        <dbReference type="ChEBI" id="CHEBI:61717"/>
        <label>1</label>
    </ligand>
</feature>
<feature type="binding site" description="axial binding residue" evidence="3">
    <location>
        <position position="77"/>
    </location>
    <ligand>
        <name>heme c</name>
        <dbReference type="ChEBI" id="CHEBI:61717"/>
        <label>1</label>
    </ligand>
    <ligandPart>
        <name>Fe</name>
        <dbReference type="ChEBI" id="CHEBI:18248"/>
    </ligandPart>
</feature>
<feature type="binding site" description="covalent" evidence="3">
    <location>
        <position position="174"/>
    </location>
    <ligand>
        <name>heme c</name>
        <dbReference type="ChEBI" id="CHEBI:61717"/>
        <label>2</label>
    </ligand>
</feature>
<feature type="binding site" description="covalent" evidence="3">
    <location>
        <position position="177"/>
    </location>
    <ligand>
        <name>heme c</name>
        <dbReference type="ChEBI" id="CHEBI:61717"/>
        <label>2</label>
    </ligand>
</feature>
<feature type="binding site" description="axial binding residue" evidence="3">
    <location>
        <position position="178"/>
    </location>
    <ligand>
        <name>heme c</name>
        <dbReference type="ChEBI" id="CHEBI:61717"/>
        <label>2</label>
    </ligand>
    <ligandPart>
        <name>Fe</name>
        <dbReference type="ChEBI" id="CHEBI:18248"/>
    </ligandPart>
</feature>
<feature type="turn" evidence="7">
    <location>
        <begin position="63"/>
        <end position="68"/>
    </location>
</feature>
<feature type="helix" evidence="7">
    <location>
        <begin position="69"/>
        <end position="72"/>
    </location>
</feature>
<feature type="helix" evidence="7">
    <location>
        <begin position="74"/>
        <end position="77"/>
    </location>
</feature>
<feature type="turn" evidence="7">
    <location>
        <begin position="78"/>
        <end position="81"/>
    </location>
</feature>
<feature type="strand" evidence="6">
    <location>
        <begin position="85"/>
        <end position="87"/>
    </location>
</feature>
<feature type="helix" evidence="7">
    <location>
        <begin position="96"/>
        <end position="104"/>
    </location>
</feature>
<feature type="helix" evidence="7">
    <location>
        <begin position="128"/>
        <end position="137"/>
    </location>
</feature>
<feature type="strand" evidence="7">
    <location>
        <begin position="151"/>
        <end position="153"/>
    </location>
</feature>
<feature type="helix" evidence="7">
    <location>
        <begin position="163"/>
        <end position="173"/>
    </location>
</feature>
<feature type="turn" evidence="7">
    <location>
        <begin position="174"/>
        <end position="177"/>
    </location>
</feature>
<feature type="strand" evidence="7">
    <location>
        <begin position="180"/>
        <end position="182"/>
    </location>
</feature>
<feature type="strand" evidence="7">
    <location>
        <begin position="188"/>
        <end position="190"/>
    </location>
</feature>
<feature type="strand" evidence="7">
    <location>
        <begin position="196"/>
        <end position="198"/>
    </location>
</feature>
<feature type="helix" evidence="7">
    <location>
        <begin position="201"/>
        <end position="210"/>
    </location>
</feature>
<feature type="turn" evidence="7">
    <location>
        <begin position="220"/>
        <end position="222"/>
    </location>
</feature>
<feature type="helix" evidence="7">
    <location>
        <begin position="225"/>
        <end position="238"/>
    </location>
</feature>
<feature type="strand" evidence="6">
    <location>
        <begin position="250"/>
        <end position="253"/>
    </location>
</feature>
<feature type="helix" evidence="7">
    <location>
        <begin position="254"/>
        <end position="263"/>
    </location>
</feature>
<feature type="helix" evidence="7">
    <location>
        <begin position="265"/>
        <end position="276"/>
    </location>
</feature>
<comment type="function">
    <text evidence="5">Cytochrome b subunit of the cytochrome bc1 complex, an essential component of the respiratory electron transport chain required for ATP synthesis. The bc1 complex catalyzes the oxidation of ubiquinol and the reduction of cytochrome c in the respiratory chain. The bc1 complex operates through a Q-cycle mechanism that couples electron transfer to generation of the proton gradient that drives ATP synthesis.</text>
</comment>
<comment type="catalytic activity">
    <reaction evidence="5">
        <text>a quinol + 2 Fe(III)-[cytochrome c](out) = a quinone + 2 Fe(II)-[cytochrome c](out) + 2 H(+)(out)</text>
        <dbReference type="Rhea" id="RHEA:11484"/>
        <dbReference type="Rhea" id="RHEA-COMP:10350"/>
        <dbReference type="Rhea" id="RHEA-COMP:14399"/>
        <dbReference type="ChEBI" id="CHEBI:15378"/>
        <dbReference type="ChEBI" id="CHEBI:24646"/>
        <dbReference type="ChEBI" id="CHEBI:29033"/>
        <dbReference type="ChEBI" id="CHEBI:29034"/>
        <dbReference type="ChEBI" id="CHEBI:132124"/>
        <dbReference type="EC" id="7.1.1.8"/>
    </reaction>
</comment>
<comment type="subunit">
    <text evidence="5">The cytochrome bc1 complex is composed of a cytochrome b (QcrB), the Rieske iron-sulfur protein (QcrA) and a diheme cytochrome c (QcrC) subunit.</text>
</comment>
<comment type="subcellular location">
    <subcellularLocation>
        <location evidence="2">Cell membrane</location>
        <topology evidence="2">Multi-pass membrane protein</topology>
    </subcellularLocation>
</comment>
<comment type="PTM">
    <text evidence="1">Binds 2 heme c groups covalently per subunit.</text>
</comment>
<comment type="miscellaneous">
    <text evidence="4">Was identified as a high-confidence drug target.</text>
</comment>
<gene>
    <name type="primary">qcrC</name>
    <name type="ordered locus">Rv2194</name>
    <name type="ORF">MTCY190.05</name>
</gene>
<protein>
    <recommendedName>
        <fullName>Cytochrome bc1 complex cytochrome c subunit</fullName>
        <ecNumber evidence="5">7.1.1.8</ecNumber>
    </recommendedName>
    <alternativeName>
        <fullName>Cytochrome bc1 reductase complex subunit QcrC</fullName>
    </alternativeName>
    <alternativeName>
        <fullName>Ubiquinol--cytochrome c reductase cytochrome c subunit</fullName>
    </alternativeName>
</protein>
<keyword id="KW-0002">3D-structure</keyword>
<keyword id="KW-1003">Cell membrane</keyword>
<keyword id="KW-0249">Electron transport</keyword>
<keyword id="KW-0349">Heme</keyword>
<keyword id="KW-0408">Iron</keyword>
<keyword id="KW-0472">Membrane</keyword>
<keyword id="KW-0479">Metal-binding</keyword>
<keyword id="KW-1185">Reference proteome</keyword>
<keyword id="KW-0677">Repeat</keyword>
<keyword id="KW-0679">Respiratory chain</keyword>
<keyword id="KW-1278">Translocase</keyword>
<keyword id="KW-0812">Transmembrane</keyword>
<keyword id="KW-1133">Transmembrane helix</keyword>
<keyword id="KW-0813">Transport</keyword>
<name>QCRC_MYCTU</name>
<evidence type="ECO:0000250" key="1">
    <source>
        <dbReference type="UniProtKB" id="Q8NNK5"/>
    </source>
</evidence>
<evidence type="ECO:0000255" key="2"/>
<evidence type="ECO:0000255" key="3">
    <source>
        <dbReference type="PROSITE-ProRule" id="PRU00433"/>
    </source>
</evidence>
<evidence type="ECO:0000303" key="4">
    <source>
    </source>
</evidence>
<evidence type="ECO:0000305" key="5"/>
<evidence type="ECO:0007829" key="6">
    <source>
        <dbReference type="PDB" id="7E1V"/>
    </source>
</evidence>
<evidence type="ECO:0007829" key="7">
    <source>
        <dbReference type="PDB" id="7E1W"/>
    </source>
</evidence>